<reference key="1">
    <citation type="journal article" date="2003" name="Genome Res.">
        <title>Genome sequence of an M3 strain of Streptococcus pyogenes reveals a large-scale genomic rearrangement in invasive strains and new insights into phage evolution.</title>
        <authorList>
            <person name="Nakagawa I."/>
            <person name="Kurokawa K."/>
            <person name="Yamashita A."/>
            <person name="Nakata M."/>
            <person name="Tomiyasu Y."/>
            <person name="Okahashi N."/>
            <person name="Kawabata S."/>
            <person name="Yamazaki K."/>
            <person name="Shiba T."/>
            <person name="Yasunaga T."/>
            <person name="Hayashi H."/>
            <person name="Hattori M."/>
            <person name="Hamada S."/>
        </authorList>
    </citation>
    <scope>NUCLEOTIDE SEQUENCE [LARGE SCALE GENOMIC DNA]</scope>
    <source>
        <strain>SSI-1</strain>
    </source>
</reference>
<evidence type="ECO:0000250" key="1"/>
<evidence type="ECO:0000255" key="2">
    <source>
        <dbReference type="HAMAP-Rule" id="MF_01964"/>
    </source>
</evidence>
<sequence>MSNWDTKFLKKGYTFDDVLLIPAESHVLPNEVDLKTKLADNLTLNIPIITAAMDTVTGSKMAIAIARAGGLGVIHKNMSITEQAEEVRKVKRSENGVIIDPFFLTPEHKVSEAEELMQRYRISGVPIVETLANRKLVGIITNRDMRFISNYNAPISEHMTSEHLVTAAVGTDLETAERILHEHRIEKLPLVDNSGRLSGLITIKDIEKVIEFPHAAKDEFGRLLVAAAVGVTSDTFERAEALFEAGADAIVIDTAHGHSAGVLRKIAEIRAHFPNRTLIAGNIATAEGARALYDAGVDVVKVGIGPGSICTTRVVAGVGVPQVTAIYDAAAVAREYGKTIIADGGIKYSGDIVKALAAGGNAVMLGSMFAGTDEAPGETEIYQGRKFKTYRGMGSIAAMKKGSSDRYFQGSVNEANKLVPEGIEGRVAYKGAASDIVFQMLGGIRSGMGYVGAGDIQELHENAQFVEMSGAGLIESHPHDVQITNEAPNYSVH</sequence>
<proteinExistence type="inferred from homology"/>
<organism>
    <name type="scientific">Streptococcus pyogenes serotype M3 (strain SSI-1)</name>
    <dbReference type="NCBI Taxonomy" id="193567"/>
    <lineage>
        <taxon>Bacteria</taxon>
        <taxon>Bacillati</taxon>
        <taxon>Bacillota</taxon>
        <taxon>Bacilli</taxon>
        <taxon>Lactobacillales</taxon>
        <taxon>Streptococcaceae</taxon>
        <taxon>Streptococcus</taxon>
    </lineage>
</organism>
<name>IMDH_STRPQ</name>
<comment type="function">
    <text evidence="2">Catalyzes the conversion of inosine 5'-phosphate (IMP) to xanthosine 5'-phosphate (XMP), the first committed and rate-limiting step in the de novo synthesis of guanine nucleotides, and therefore plays an important role in the regulation of cell growth.</text>
</comment>
<comment type="catalytic activity">
    <reaction evidence="2">
        <text>IMP + NAD(+) + H2O = XMP + NADH + H(+)</text>
        <dbReference type="Rhea" id="RHEA:11708"/>
        <dbReference type="ChEBI" id="CHEBI:15377"/>
        <dbReference type="ChEBI" id="CHEBI:15378"/>
        <dbReference type="ChEBI" id="CHEBI:57464"/>
        <dbReference type="ChEBI" id="CHEBI:57540"/>
        <dbReference type="ChEBI" id="CHEBI:57945"/>
        <dbReference type="ChEBI" id="CHEBI:58053"/>
        <dbReference type="EC" id="1.1.1.205"/>
    </reaction>
</comment>
<comment type="cofactor">
    <cofactor evidence="2">
        <name>K(+)</name>
        <dbReference type="ChEBI" id="CHEBI:29103"/>
    </cofactor>
</comment>
<comment type="activity regulation">
    <text evidence="2">Mycophenolic acid (MPA) is a non-competitive inhibitor that prevents formation of the closed enzyme conformation by binding to the same site as the amobile flap. In contrast, mizoribine monophosphate (MZP) is a competitive inhibitor that induces the closed conformation. MPA is a potent inhibitor of mammalian IMPDHs but a poor inhibitor of the bacterial enzymes. MZP is a more potent inhibitor of bacterial IMPDH.</text>
</comment>
<comment type="pathway">
    <text evidence="2">Purine metabolism; XMP biosynthesis via de novo pathway; XMP from IMP: step 1/1.</text>
</comment>
<comment type="subunit">
    <text evidence="2">Homotetramer.</text>
</comment>
<comment type="similarity">
    <text evidence="2">Belongs to the IMPDH/GMPR family.</text>
</comment>
<dbReference type="EC" id="1.1.1.205" evidence="2"/>
<dbReference type="EMBL" id="BA000034">
    <property type="protein sequence ID" value="BAC64948.1"/>
    <property type="molecule type" value="Genomic_DNA"/>
</dbReference>
<dbReference type="RefSeq" id="WP_011055116.1">
    <property type="nucleotide sequence ID" value="NC_004606.1"/>
</dbReference>
<dbReference type="SMR" id="P0DB89"/>
<dbReference type="KEGG" id="sps:SPs1853"/>
<dbReference type="HOGENOM" id="CLU_022552_1_0_9"/>
<dbReference type="UniPathway" id="UPA00601">
    <property type="reaction ID" value="UER00295"/>
</dbReference>
<dbReference type="GO" id="GO:0003938">
    <property type="term" value="F:IMP dehydrogenase activity"/>
    <property type="evidence" value="ECO:0007669"/>
    <property type="project" value="UniProtKB-UniRule"/>
</dbReference>
<dbReference type="GO" id="GO:0046872">
    <property type="term" value="F:metal ion binding"/>
    <property type="evidence" value="ECO:0007669"/>
    <property type="project" value="UniProtKB-UniRule"/>
</dbReference>
<dbReference type="GO" id="GO:0000166">
    <property type="term" value="F:nucleotide binding"/>
    <property type="evidence" value="ECO:0007669"/>
    <property type="project" value="UniProtKB-UniRule"/>
</dbReference>
<dbReference type="GO" id="GO:0006177">
    <property type="term" value="P:GMP biosynthetic process"/>
    <property type="evidence" value="ECO:0007669"/>
    <property type="project" value="UniProtKB-UniRule"/>
</dbReference>
<dbReference type="GO" id="GO:0006183">
    <property type="term" value="P:GTP biosynthetic process"/>
    <property type="evidence" value="ECO:0007669"/>
    <property type="project" value="TreeGrafter"/>
</dbReference>
<dbReference type="CDD" id="cd04601">
    <property type="entry name" value="CBS_pair_IMPDH"/>
    <property type="match status" value="1"/>
</dbReference>
<dbReference type="CDD" id="cd00381">
    <property type="entry name" value="IMPDH"/>
    <property type="match status" value="1"/>
</dbReference>
<dbReference type="FunFam" id="3.20.20.70:FF:000003">
    <property type="entry name" value="GMP reductase"/>
    <property type="match status" value="1"/>
</dbReference>
<dbReference type="Gene3D" id="3.20.20.70">
    <property type="entry name" value="Aldolase class I"/>
    <property type="match status" value="1"/>
</dbReference>
<dbReference type="HAMAP" id="MF_01964">
    <property type="entry name" value="IMPDH"/>
    <property type="match status" value="1"/>
</dbReference>
<dbReference type="InterPro" id="IPR013785">
    <property type="entry name" value="Aldolase_TIM"/>
</dbReference>
<dbReference type="InterPro" id="IPR000644">
    <property type="entry name" value="CBS_dom"/>
</dbReference>
<dbReference type="InterPro" id="IPR046342">
    <property type="entry name" value="CBS_dom_sf"/>
</dbReference>
<dbReference type="InterPro" id="IPR005990">
    <property type="entry name" value="IMP_DH"/>
</dbReference>
<dbReference type="InterPro" id="IPR015875">
    <property type="entry name" value="IMP_DH/GMP_Rdtase_CS"/>
</dbReference>
<dbReference type="InterPro" id="IPR001093">
    <property type="entry name" value="IMP_DH_GMPRt"/>
</dbReference>
<dbReference type="NCBIfam" id="TIGR01302">
    <property type="entry name" value="IMP_dehydrog"/>
    <property type="match status" value="1"/>
</dbReference>
<dbReference type="PANTHER" id="PTHR11911:SF111">
    <property type="entry name" value="INOSINE-5'-MONOPHOSPHATE DEHYDROGENASE"/>
    <property type="match status" value="1"/>
</dbReference>
<dbReference type="PANTHER" id="PTHR11911">
    <property type="entry name" value="INOSINE-5-MONOPHOSPHATE DEHYDROGENASE RELATED"/>
    <property type="match status" value="1"/>
</dbReference>
<dbReference type="Pfam" id="PF00571">
    <property type="entry name" value="CBS"/>
    <property type="match status" value="2"/>
</dbReference>
<dbReference type="Pfam" id="PF00478">
    <property type="entry name" value="IMPDH"/>
    <property type="match status" value="1"/>
</dbReference>
<dbReference type="PIRSF" id="PIRSF000130">
    <property type="entry name" value="IMPDH"/>
    <property type="match status" value="1"/>
</dbReference>
<dbReference type="SMART" id="SM00116">
    <property type="entry name" value="CBS"/>
    <property type="match status" value="2"/>
</dbReference>
<dbReference type="SMART" id="SM01240">
    <property type="entry name" value="IMPDH"/>
    <property type="match status" value="1"/>
</dbReference>
<dbReference type="SUPFAM" id="SSF54631">
    <property type="entry name" value="CBS-domain pair"/>
    <property type="match status" value="1"/>
</dbReference>
<dbReference type="SUPFAM" id="SSF51412">
    <property type="entry name" value="Inosine monophosphate dehydrogenase (IMPDH)"/>
    <property type="match status" value="1"/>
</dbReference>
<dbReference type="PROSITE" id="PS51371">
    <property type="entry name" value="CBS"/>
    <property type="match status" value="2"/>
</dbReference>
<dbReference type="PROSITE" id="PS00487">
    <property type="entry name" value="IMP_DH_GMP_RED"/>
    <property type="match status" value="1"/>
</dbReference>
<accession>P0DB89</accession>
<accession>Q8K5G1</accession>
<keyword id="KW-0129">CBS domain</keyword>
<keyword id="KW-0332">GMP biosynthesis</keyword>
<keyword id="KW-0479">Metal-binding</keyword>
<keyword id="KW-0520">NAD</keyword>
<keyword id="KW-0560">Oxidoreductase</keyword>
<keyword id="KW-0630">Potassium</keyword>
<keyword id="KW-0658">Purine biosynthesis</keyword>
<keyword id="KW-0677">Repeat</keyword>
<feature type="initiator methionine" description="Removed" evidence="1">
    <location>
        <position position="1"/>
    </location>
</feature>
<feature type="chain" id="PRO_0000411382" description="Inosine-5'-monophosphate dehydrogenase">
    <location>
        <begin position="2"/>
        <end position="493"/>
    </location>
</feature>
<feature type="domain" description="CBS 1" evidence="2">
    <location>
        <begin position="97"/>
        <end position="155"/>
    </location>
</feature>
<feature type="domain" description="CBS 2" evidence="2">
    <location>
        <begin position="159"/>
        <end position="219"/>
    </location>
</feature>
<feature type="active site" description="Thioimidate intermediate" evidence="2">
    <location>
        <position position="310"/>
    </location>
</feature>
<feature type="active site" description="Proton acceptor" evidence="2">
    <location>
        <position position="406"/>
    </location>
</feature>
<feature type="binding site" evidence="2">
    <location>
        <position position="253"/>
    </location>
    <ligand>
        <name>NAD(+)</name>
        <dbReference type="ChEBI" id="CHEBI:57540"/>
    </ligand>
</feature>
<feature type="binding site" evidence="2">
    <location>
        <begin position="303"/>
        <end position="305"/>
    </location>
    <ligand>
        <name>NAD(+)</name>
        <dbReference type="ChEBI" id="CHEBI:57540"/>
    </ligand>
</feature>
<feature type="binding site" description="in other chain" evidence="2">
    <location>
        <position position="305"/>
    </location>
    <ligand>
        <name>K(+)</name>
        <dbReference type="ChEBI" id="CHEBI:29103"/>
        <note>ligand shared between two tetrameric partners</note>
    </ligand>
</feature>
<feature type="binding site" description="in other chain" evidence="2">
    <location>
        <position position="307"/>
    </location>
    <ligand>
        <name>K(+)</name>
        <dbReference type="ChEBI" id="CHEBI:29103"/>
        <note>ligand shared between two tetrameric partners</note>
    </ligand>
</feature>
<feature type="binding site" evidence="2">
    <location>
        <position position="308"/>
    </location>
    <ligand>
        <name>IMP</name>
        <dbReference type="ChEBI" id="CHEBI:58053"/>
    </ligand>
</feature>
<feature type="binding site" description="in other chain" evidence="2">
    <location>
        <position position="310"/>
    </location>
    <ligand>
        <name>K(+)</name>
        <dbReference type="ChEBI" id="CHEBI:29103"/>
        <note>ligand shared between two tetrameric partners</note>
    </ligand>
</feature>
<feature type="binding site" evidence="2">
    <location>
        <begin position="343"/>
        <end position="345"/>
    </location>
    <ligand>
        <name>IMP</name>
        <dbReference type="ChEBI" id="CHEBI:58053"/>
    </ligand>
</feature>
<feature type="binding site" evidence="2">
    <location>
        <begin position="366"/>
        <end position="367"/>
    </location>
    <ligand>
        <name>IMP</name>
        <dbReference type="ChEBI" id="CHEBI:58053"/>
    </ligand>
</feature>
<feature type="binding site" evidence="2">
    <location>
        <begin position="390"/>
        <end position="394"/>
    </location>
    <ligand>
        <name>IMP</name>
        <dbReference type="ChEBI" id="CHEBI:58053"/>
    </ligand>
</feature>
<feature type="binding site" evidence="2">
    <location>
        <position position="421"/>
    </location>
    <ligand>
        <name>IMP</name>
        <dbReference type="ChEBI" id="CHEBI:58053"/>
    </ligand>
</feature>
<feature type="binding site" evidence="2">
    <location>
        <position position="475"/>
    </location>
    <ligand>
        <name>K(+)</name>
        <dbReference type="ChEBI" id="CHEBI:29103"/>
        <note>ligand shared between two tetrameric partners</note>
    </ligand>
</feature>
<feature type="binding site" evidence="2">
    <location>
        <position position="476"/>
    </location>
    <ligand>
        <name>K(+)</name>
        <dbReference type="ChEBI" id="CHEBI:29103"/>
        <note>ligand shared between two tetrameric partners</note>
    </ligand>
</feature>
<feature type="binding site" evidence="2">
    <location>
        <position position="477"/>
    </location>
    <ligand>
        <name>K(+)</name>
        <dbReference type="ChEBI" id="CHEBI:29103"/>
        <note>ligand shared between two tetrameric partners</note>
    </ligand>
</feature>
<gene>
    <name evidence="2" type="primary">guaB</name>
    <name type="synonym">impD</name>
    <name type="ordered locus">SPs1853</name>
</gene>
<protein>
    <recommendedName>
        <fullName evidence="2">Inosine-5'-monophosphate dehydrogenase</fullName>
        <shortName evidence="2">IMP dehydrogenase</shortName>
        <shortName evidence="2">IMPD</shortName>
        <shortName evidence="2">IMPDH</shortName>
        <ecNumber evidence="2">1.1.1.205</ecNumber>
    </recommendedName>
</protein>